<organismHost>
    <name type="scientific">Homo sapiens</name>
    <name type="common">Human</name>
    <dbReference type="NCBI Taxonomy" id="9606"/>
</organismHost>
<organismHost>
    <name type="scientific">Sus scrofa</name>
    <name type="common">Pig</name>
    <dbReference type="NCBI Taxonomy" id="9823"/>
</organismHost>
<organism>
    <name type="scientific">Influenza C virus (strain C/Nara/2/1985)</name>
    <dbReference type="NCBI Taxonomy" id="127957"/>
    <lineage>
        <taxon>Viruses</taxon>
        <taxon>Riboviria</taxon>
        <taxon>Orthornavirae</taxon>
        <taxon>Negarnaviricota</taxon>
        <taxon>Polyploviricotina</taxon>
        <taxon>Insthoviricetes</taxon>
        <taxon>Articulavirales</taxon>
        <taxon>Orthomyxoviridae</taxon>
        <taxon>Gammainfluenzavirus</taxon>
        <taxon>Gammainfluenzavirus influenzae</taxon>
        <taxon>Influenza C virus</taxon>
    </lineage>
</organism>
<keyword id="KW-1015">Disulfide bond</keyword>
<keyword id="KW-1170">Fusion of virus membrane with host endosomal membrane</keyword>
<keyword id="KW-1168">Fusion of virus membrane with host membrane</keyword>
<keyword id="KW-0325">Glycoprotein</keyword>
<keyword id="KW-0348">Hemagglutinin</keyword>
<keyword id="KW-1032">Host cell membrane</keyword>
<keyword id="KW-1043">Host membrane</keyword>
<keyword id="KW-0945">Host-virus interaction</keyword>
<keyword id="KW-0378">Hydrolase</keyword>
<keyword id="KW-0472">Membrane</keyword>
<keyword id="KW-0732">Signal</keyword>
<keyword id="KW-0812">Transmembrane</keyword>
<keyword id="KW-1133">Transmembrane helix</keyword>
<keyword id="KW-1161">Viral attachment to host cell</keyword>
<keyword id="KW-0261">Viral envelope protein</keyword>
<keyword id="KW-1162">Viral penetration into host cytoplasm</keyword>
<keyword id="KW-0946">Virion</keyword>
<keyword id="KW-1164">Virus endocytosis by host</keyword>
<keyword id="KW-1160">Virus entry into host cell</keyword>
<sequence>MLGLTEAEKIKICLQKQVNSSFSLHNGFGGNLYATEEKRMFELVKPKAGASVLNQSTWIGFGDSRTDQSNSAFPRSADVSAKTADKFRSLSGGSLMLSMFGPPGKVDYLYQGCGKHKVFYEGVNWSPHAAIDCYRKNWTDIKLNFQKSIYELASQSHCMSLVNALDKTIPLQVTKGVAKNCNNSFLKNPALYTQEVKPLEQICGKENLAFFTLPTQFGTYECKLHLVASCYFIYDSKEVYNKRGCGNYFQVIYDSSGKVVGGLDNRVSPYTGNSGDTPTMQCDMLQLKPGRYSVRSSPRFLLMPERSYCFDMKEKGPVTAVQSIWGKGRESDYAVDQACLSTPGCMLIQKQKPYIGEADDHHGDQEMRELLSGLDYEARCISQSGWVNETSPFTEEYLLPPKFGRCPLAAKEESIPKIPDGLLIPTSGTDTTVTKPKSRIFGIDDLIIGLLFVAIVEAGIGGYLLGSRKESGGGVTKESAEKGFEKIGNDIQILRSSTNIAIEKLNDRISHDEQAIRDLTLEIENARSEALLGELGIIRALLVGNISIGLQESLWELASEITNRAGDLAVEVSPGCWIIDNNICDQSCQNFIFKFNETAPVPTIPPLDTKIDLQSDPFYWGSSLGLAITAAISLAALVISGIAICRTK</sequence>
<accession>Q67387</accession>
<proteinExistence type="inferred from homology"/>
<reference key="1">
    <citation type="journal article" date="1994" name="J. Gen. Virol.">
        <title>Genetic reassortment of influenza C viruses in man.</title>
        <authorList>
            <person name="Peng G."/>
            <person name="Hongo S."/>
            <person name="Muraki Y."/>
            <person name="Sugawara K."/>
            <person name="Nishimura H."/>
            <person name="Kitame F."/>
            <person name="Nakamura K."/>
        </authorList>
    </citation>
    <scope>NUCLEOTIDE SEQUENCE [GENOMIC RNA]</scope>
</reference>
<gene>
    <name evidence="2" type="primary">HE</name>
</gene>
<feature type="signal peptide" evidence="1">
    <location>
        <begin position="1"/>
        <end position="7"/>
    </location>
</feature>
<feature type="chain" id="PRO_0000039160" description="Hemagglutinin-esterase-fusion glycoprotein chain 1" evidence="2">
    <location>
        <begin position="8"/>
        <end position="439"/>
    </location>
</feature>
<feature type="chain" id="PRO_0000039161" description="Hemagglutinin-esterase-fusion glycoprotein chain 2" evidence="2">
    <location>
        <begin position="440"/>
        <end position="648"/>
    </location>
</feature>
<feature type="topological domain" description="Extracellular" evidence="2">
    <location>
        <begin position="8"/>
        <end position="623"/>
    </location>
</feature>
<feature type="transmembrane region" description="Helical" evidence="2">
    <location>
        <begin position="624"/>
        <end position="644"/>
    </location>
</feature>
<feature type="topological domain" description="Cytoplasmic" evidence="2">
    <location>
        <begin position="645"/>
        <end position="648"/>
    </location>
</feature>
<feature type="region of interest" description="Fusion domain-1" evidence="2">
    <location>
        <begin position="8"/>
        <end position="33"/>
    </location>
</feature>
<feature type="region of interest" description="Esterase domain-1" evidence="2">
    <location>
        <begin position="34"/>
        <end position="151"/>
    </location>
</feature>
<feature type="region of interest" description="N-acetyl-9-O-acetylneuraminic acid binding" evidence="2">
    <location>
        <begin position="151"/>
        <end position="303"/>
    </location>
</feature>
<feature type="region of interest" description="Esterase domain-2" evidence="2">
    <location>
        <begin position="303"/>
        <end position="357"/>
    </location>
</feature>
<feature type="region of interest" description="Fusion domain-2" evidence="2">
    <location>
        <begin position="358"/>
        <end position="643"/>
    </location>
</feature>
<feature type="active site" description="Nucleophile" evidence="2">
    <location>
        <position position="64"/>
    </location>
</feature>
<feature type="active site" description="Charge relay system" evidence="2">
    <location>
        <position position="359"/>
    </location>
</feature>
<feature type="active site" description="Charge relay system" evidence="2">
    <location>
        <position position="362"/>
    </location>
</feature>
<feature type="glycosylation site" description="N-linked (GlcNAc...) asparagine; by host" evidence="2">
    <location>
        <position position="19"/>
    </location>
</feature>
<feature type="glycosylation site" description="N-linked (GlcNAc...) asparagine; by host" evidence="2">
    <location>
        <position position="54"/>
    </location>
</feature>
<feature type="glycosylation site" description="N-linked (GlcNAc...) asparagine; by host" evidence="2">
    <location>
        <position position="137"/>
    </location>
</feature>
<feature type="glycosylation site" description="N-linked (GlcNAc...) asparagine; by host" evidence="2">
    <location>
        <position position="182"/>
    </location>
</feature>
<feature type="glycosylation site" description="N-linked (GlcNAc...) asparagine; by host" evidence="2">
    <location>
        <position position="388"/>
    </location>
</feature>
<feature type="glycosylation site" description="N-linked (GlcNAc...) asparagine; by host" evidence="2">
    <location>
        <position position="545"/>
    </location>
</feature>
<feature type="glycosylation site" description="N-linked (GlcNAc...) asparagine; by host" evidence="2">
    <location>
        <position position="596"/>
    </location>
</feature>
<feature type="disulfide bond" description="Interchain (between HEF1 and HEF2 chains)" evidence="2">
    <location>
        <begin position="13"/>
        <end position="576"/>
    </location>
</feature>
<feature type="disulfide bond" evidence="2">
    <location>
        <begin position="203"/>
        <end position="245"/>
    </location>
</feature>
<feature type="disulfide bond" evidence="2">
    <location>
        <begin position="222"/>
        <end position="309"/>
    </location>
</feature>
<feature type="disulfide bond" evidence="2">
    <location>
        <begin position="230"/>
        <end position="282"/>
    </location>
</feature>
<name>HEMA_INCNB</name>
<protein>
    <recommendedName>
        <fullName evidence="2">Hemagglutinin-esterase-fusion glycoprotein</fullName>
        <shortName evidence="2">HEF</shortName>
        <ecNumber evidence="2">3.1.1.53</ecNumber>
    </recommendedName>
    <component>
        <recommendedName>
            <fullName evidence="2">Hemagglutinin-esterase-fusion glycoprotein chain 1</fullName>
            <shortName evidence="2">HEF1</shortName>
        </recommendedName>
    </component>
    <component>
        <recommendedName>
            <fullName evidence="2">Hemagglutinin-esterase-fusion glycoprotein chain 2</fullName>
            <shortName evidence="2">HEF2</shortName>
        </recommendedName>
    </component>
</protein>
<comment type="function">
    <text evidence="2">Binds to the N-acetyl-9-O-acetylneuraminic acid residues on the cell surface, bringing about the attachment of the virus particle to the cell. Plays a major role in the determination of host range restriction and virulence. Class I viral fusion protein. Responsible for penetration of the virus into the cell cytoplasm by mediating the fusion of the membrane of the endocytosed virus particle with the endosomal membrane. Low pH in endosomes induce an irreversible conformational change in HEF2, releasing the fusion hydrophobic peptide. Several trimers are required to form a competent fusion pore. Displays a receptor-destroying activity which is a neuraminidate-O-acetyl esterase. This activity cleaves off any receptor on the cell surface, which would otherwise prevent virions release. These cleavages prevent self-aggregation and ensure the efficient spread of the progeny virus from cell to cell.</text>
</comment>
<comment type="catalytic activity">
    <reaction evidence="2">
        <text>N-acetyl-9-O-acetylneuraminate + H2O = N-acetylneuraminate + acetate + H(+)</text>
        <dbReference type="Rhea" id="RHEA:22600"/>
        <dbReference type="ChEBI" id="CHEBI:15377"/>
        <dbReference type="ChEBI" id="CHEBI:15378"/>
        <dbReference type="ChEBI" id="CHEBI:28999"/>
        <dbReference type="ChEBI" id="CHEBI:30089"/>
        <dbReference type="ChEBI" id="CHEBI:35418"/>
        <dbReference type="EC" id="3.1.1.53"/>
    </reaction>
</comment>
<comment type="catalytic activity">
    <reaction evidence="2">
        <text>N-acetyl-4-O-acetylneuraminate + H2O = N-acetylneuraminate + acetate + H(+)</text>
        <dbReference type="Rhea" id="RHEA:25564"/>
        <dbReference type="ChEBI" id="CHEBI:15377"/>
        <dbReference type="ChEBI" id="CHEBI:15378"/>
        <dbReference type="ChEBI" id="CHEBI:29006"/>
        <dbReference type="ChEBI" id="CHEBI:30089"/>
        <dbReference type="ChEBI" id="CHEBI:35418"/>
        <dbReference type="EC" id="3.1.1.53"/>
    </reaction>
</comment>
<comment type="subunit">
    <text evidence="2">Homotrimer of disulfide-linked HEF1-HEF2.</text>
</comment>
<comment type="subcellular location">
    <subcellularLocation>
        <location evidence="2">Virion membrane</location>
        <topology evidence="2">Single-pass type I membrane protein</topology>
    </subcellularLocation>
    <subcellularLocation>
        <location evidence="2">Host cell membrane</location>
        <topology evidence="2">Single-pass type I membrane protein</topology>
    </subcellularLocation>
</comment>
<comment type="PTM">
    <text evidence="2">In natural infection, inactive HEF is matured into HEF1 and HEF2 outside the cell by one or more trypsin-like, arginine-specific endoprotease.</text>
</comment>
<comment type="similarity">
    <text evidence="2">Belongs to the influenza viruses hemagglutinin family.</text>
</comment>
<evidence type="ECO:0000250" key="1"/>
<evidence type="ECO:0000255" key="2">
    <source>
        <dbReference type="HAMAP-Rule" id="MF_04072"/>
    </source>
</evidence>
<dbReference type="EC" id="3.1.1.53" evidence="2"/>
<dbReference type="EMBL" id="D30697">
    <property type="protein sequence ID" value="BAA06368.1"/>
    <property type="molecule type" value="Genomic_RNA"/>
</dbReference>
<dbReference type="SMR" id="Q67387"/>
<dbReference type="GlyCosmos" id="Q67387">
    <property type="glycosylation" value="7 sites, No reported glycans"/>
</dbReference>
<dbReference type="GO" id="GO:0020002">
    <property type="term" value="C:host cell plasma membrane"/>
    <property type="evidence" value="ECO:0007669"/>
    <property type="project" value="UniProtKB-SubCell"/>
</dbReference>
<dbReference type="GO" id="GO:0016020">
    <property type="term" value="C:membrane"/>
    <property type="evidence" value="ECO:0007669"/>
    <property type="project" value="UniProtKB-UniRule"/>
</dbReference>
<dbReference type="GO" id="GO:0019031">
    <property type="term" value="C:viral envelope"/>
    <property type="evidence" value="ECO:0007669"/>
    <property type="project" value="UniProtKB-UniRule"/>
</dbReference>
<dbReference type="GO" id="GO:0055036">
    <property type="term" value="C:virion membrane"/>
    <property type="evidence" value="ECO:0007669"/>
    <property type="project" value="UniProtKB-SubCell"/>
</dbReference>
<dbReference type="GO" id="GO:0046789">
    <property type="term" value="F:host cell surface receptor binding"/>
    <property type="evidence" value="ECO:0007669"/>
    <property type="project" value="UniProtKB-UniRule"/>
</dbReference>
<dbReference type="GO" id="GO:0106331">
    <property type="term" value="F:sialate 4-O-acetylesterase activity"/>
    <property type="evidence" value="ECO:0007669"/>
    <property type="project" value="RHEA"/>
</dbReference>
<dbReference type="GO" id="GO:0106330">
    <property type="term" value="F:sialate 9-O-acetylesterase activity"/>
    <property type="evidence" value="ECO:0007669"/>
    <property type="project" value="RHEA"/>
</dbReference>
<dbReference type="GO" id="GO:0075509">
    <property type="term" value="P:endocytosis involved in viral entry into host cell"/>
    <property type="evidence" value="ECO:0007669"/>
    <property type="project" value="UniProtKB-KW"/>
</dbReference>
<dbReference type="GO" id="GO:0039654">
    <property type="term" value="P:fusion of virus membrane with host endosome membrane"/>
    <property type="evidence" value="ECO:0007669"/>
    <property type="project" value="UniProtKB-UniRule"/>
</dbReference>
<dbReference type="GO" id="GO:0019064">
    <property type="term" value="P:fusion of virus membrane with host plasma membrane"/>
    <property type="evidence" value="ECO:0007669"/>
    <property type="project" value="InterPro"/>
</dbReference>
<dbReference type="GO" id="GO:0046761">
    <property type="term" value="P:viral budding from plasma membrane"/>
    <property type="evidence" value="ECO:0007669"/>
    <property type="project" value="UniProtKB-UniRule"/>
</dbReference>
<dbReference type="GO" id="GO:0019062">
    <property type="term" value="P:virion attachment to host cell"/>
    <property type="evidence" value="ECO:0007669"/>
    <property type="project" value="UniProtKB-KW"/>
</dbReference>
<dbReference type="Gene3D" id="2.20.70.20">
    <property type="match status" value="2"/>
</dbReference>
<dbReference type="Gene3D" id="3.90.20.10">
    <property type="match status" value="1"/>
</dbReference>
<dbReference type="HAMAP" id="MF_04072">
    <property type="entry name" value="INFV_HEMA"/>
    <property type="match status" value="1"/>
</dbReference>
<dbReference type="InterPro" id="IPR008980">
    <property type="entry name" value="Capsid_hemagglutn"/>
</dbReference>
<dbReference type="InterPro" id="IPR007142">
    <property type="entry name" value="Hemagglutn-estrase_core"/>
</dbReference>
<dbReference type="InterPro" id="IPR003860">
    <property type="entry name" value="Hemagglutn-estrase_hemagglutn"/>
</dbReference>
<dbReference type="InterPro" id="IPR001364">
    <property type="entry name" value="Hemagglutn_influenz_A/B"/>
</dbReference>
<dbReference type="InterPro" id="IPR014831">
    <property type="entry name" value="Hemagglutn_stalk_influenz-C"/>
</dbReference>
<dbReference type="Pfam" id="PF03996">
    <property type="entry name" value="Hema_esterase"/>
    <property type="match status" value="1"/>
</dbReference>
<dbReference type="Pfam" id="PF02710">
    <property type="entry name" value="Hema_HEFG"/>
    <property type="match status" value="1"/>
</dbReference>
<dbReference type="Pfam" id="PF08720">
    <property type="entry name" value="Hema_stalk"/>
    <property type="match status" value="1"/>
</dbReference>
<dbReference type="SUPFAM" id="SSF58064">
    <property type="entry name" value="Influenza hemagglutinin (stalk)"/>
    <property type="match status" value="1"/>
</dbReference>
<dbReference type="SUPFAM" id="SSF52266">
    <property type="entry name" value="SGNH hydrolase"/>
    <property type="match status" value="1"/>
</dbReference>
<dbReference type="SUPFAM" id="SSF49818">
    <property type="entry name" value="Viral protein domain"/>
    <property type="match status" value="1"/>
</dbReference>